<gene>
    <name type="primary">AFP</name>
</gene>
<dbReference type="EMBL" id="AADN02009177">
    <property type="status" value="NOT_ANNOTATED_CDS"/>
    <property type="molecule type" value="Genomic_DNA"/>
</dbReference>
<dbReference type="SMR" id="P84407"/>
<dbReference type="GlyCosmos" id="P84407">
    <property type="glycosylation" value="3 sites, No reported glycans"/>
</dbReference>
<dbReference type="GlyGen" id="P84407">
    <property type="glycosylation" value="3 sites"/>
</dbReference>
<dbReference type="PaxDb" id="9031-ENSGALP00000019033"/>
<dbReference type="VEuPathDB" id="HostDB:geneid_422652"/>
<dbReference type="eggNOG" id="ENOG502R7EA">
    <property type="taxonomic scope" value="Eukaryota"/>
</dbReference>
<dbReference type="InParanoid" id="P84407"/>
<dbReference type="OrthoDB" id="9875082at2759"/>
<dbReference type="PhylomeDB" id="P84407"/>
<dbReference type="Proteomes" id="UP000000539">
    <property type="component" value="Unassembled WGS sequence"/>
</dbReference>
<dbReference type="GO" id="GO:0005737">
    <property type="term" value="C:cytoplasm"/>
    <property type="evidence" value="ECO:0000318"/>
    <property type="project" value="GO_Central"/>
</dbReference>
<dbReference type="GO" id="GO:0005615">
    <property type="term" value="C:extracellular space"/>
    <property type="evidence" value="ECO:0007669"/>
    <property type="project" value="InterPro"/>
</dbReference>
<dbReference type="GO" id="GO:0046872">
    <property type="term" value="F:metal ion binding"/>
    <property type="evidence" value="ECO:0007669"/>
    <property type="project" value="UniProtKB-KW"/>
</dbReference>
<dbReference type="CDD" id="cd00015">
    <property type="entry name" value="ALBUMIN"/>
    <property type="match status" value="1"/>
</dbReference>
<dbReference type="FunFam" id="1.10.246.10:FF:000001">
    <property type="entry name" value="Serum albumin"/>
    <property type="match status" value="1"/>
</dbReference>
<dbReference type="FunFam" id="1.10.246.10:FF:000002">
    <property type="entry name" value="Serum albumin"/>
    <property type="match status" value="1"/>
</dbReference>
<dbReference type="Gene3D" id="1.10.246.10">
    <property type="match status" value="6"/>
</dbReference>
<dbReference type="InterPro" id="IPR000264">
    <property type="entry name" value="ALB/AFP/VDB"/>
</dbReference>
<dbReference type="InterPro" id="IPR020858">
    <property type="entry name" value="Serum_albumin-like"/>
</dbReference>
<dbReference type="InterPro" id="IPR021177">
    <property type="entry name" value="Serum_albumin/AFP/Afamin"/>
</dbReference>
<dbReference type="InterPro" id="IPR014760">
    <property type="entry name" value="Serum_albumin_N"/>
</dbReference>
<dbReference type="PANTHER" id="PTHR11385:SF14">
    <property type="entry name" value="AFAMIN"/>
    <property type="match status" value="1"/>
</dbReference>
<dbReference type="PANTHER" id="PTHR11385">
    <property type="entry name" value="SERUM ALBUMIN-RELATED"/>
    <property type="match status" value="1"/>
</dbReference>
<dbReference type="Pfam" id="PF00273">
    <property type="entry name" value="Serum_albumin"/>
    <property type="match status" value="3"/>
</dbReference>
<dbReference type="PIRSF" id="PIRSF002520">
    <property type="entry name" value="Serum_albumin_subgroup"/>
    <property type="match status" value="1"/>
</dbReference>
<dbReference type="PRINTS" id="PR00803">
    <property type="entry name" value="AFETOPROTEIN"/>
</dbReference>
<dbReference type="PRINTS" id="PR00802">
    <property type="entry name" value="SERUMALBUMIN"/>
</dbReference>
<dbReference type="SMART" id="SM00103">
    <property type="entry name" value="ALBUMIN"/>
    <property type="match status" value="3"/>
</dbReference>
<dbReference type="SUPFAM" id="SSF48552">
    <property type="entry name" value="Serum albumin-like"/>
    <property type="match status" value="3"/>
</dbReference>
<dbReference type="PROSITE" id="PS51438">
    <property type="entry name" value="ALBUMIN_2"/>
    <property type="match status" value="3"/>
</dbReference>
<reference key="1">
    <citation type="journal article" date="2004" name="Nature">
        <title>Sequence and comparative analysis of the chicken genome provide unique perspectives on vertebrate evolution.</title>
        <authorList>
            <person name="Hillier L.W."/>
            <person name="Miller W."/>
            <person name="Birney E."/>
            <person name="Warren W."/>
            <person name="Hardison R.C."/>
            <person name="Ponting C.P."/>
            <person name="Bork P."/>
            <person name="Burt D.W."/>
            <person name="Groenen M.A.M."/>
            <person name="Delany M.E."/>
            <person name="Dodgson J.B."/>
            <person name="Chinwalla A.T."/>
            <person name="Cliften P.F."/>
            <person name="Clifton S.W."/>
            <person name="Delehaunty K.D."/>
            <person name="Fronick C."/>
            <person name="Fulton R.S."/>
            <person name="Graves T.A."/>
            <person name="Kremitzki C."/>
            <person name="Layman D."/>
            <person name="Magrini V."/>
            <person name="McPherson J.D."/>
            <person name="Miner T.L."/>
            <person name="Minx P."/>
            <person name="Nash W.E."/>
            <person name="Nhan M.N."/>
            <person name="Nelson J.O."/>
            <person name="Oddy L.G."/>
            <person name="Pohl C.S."/>
            <person name="Randall-Maher J."/>
            <person name="Smith S.M."/>
            <person name="Wallis J.W."/>
            <person name="Yang S.-P."/>
            <person name="Romanov M.N."/>
            <person name="Rondelli C.M."/>
            <person name="Paton B."/>
            <person name="Smith J."/>
            <person name="Morrice D."/>
            <person name="Daniels L."/>
            <person name="Tempest H.G."/>
            <person name="Robertson L."/>
            <person name="Masabanda J.S."/>
            <person name="Griffin D.K."/>
            <person name="Vignal A."/>
            <person name="Fillon V."/>
            <person name="Jacobbson L."/>
            <person name="Kerje S."/>
            <person name="Andersson L."/>
            <person name="Crooijmans R.P."/>
            <person name="Aerts J."/>
            <person name="van der Poel J.J."/>
            <person name="Ellegren H."/>
            <person name="Caldwell R.B."/>
            <person name="Hubbard S.J."/>
            <person name="Grafham D.V."/>
            <person name="Kierzek A.M."/>
            <person name="McLaren S.R."/>
            <person name="Overton I.M."/>
            <person name="Arakawa H."/>
            <person name="Beattie K.J."/>
            <person name="Bezzubov Y."/>
            <person name="Boardman P.E."/>
            <person name="Bonfield J.K."/>
            <person name="Croning M.D.R."/>
            <person name="Davies R.M."/>
            <person name="Francis M.D."/>
            <person name="Humphray S.J."/>
            <person name="Scott C.E."/>
            <person name="Taylor R.G."/>
            <person name="Tickle C."/>
            <person name="Brown W.R.A."/>
            <person name="Rogers J."/>
            <person name="Buerstedde J.-M."/>
            <person name="Wilson S.A."/>
            <person name="Stubbs L."/>
            <person name="Ovcharenko I."/>
            <person name="Gordon L."/>
            <person name="Lucas S."/>
            <person name="Miller M.M."/>
            <person name="Inoko H."/>
            <person name="Shiina T."/>
            <person name="Kaufman J."/>
            <person name="Salomonsen J."/>
            <person name="Skjoedt K."/>
            <person name="Wong G.K.-S."/>
            <person name="Wang J."/>
            <person name="Liu B."/>
            <person name="Wang J."/>
            <person name="Yu J."/>
            <person name="Yang H."/>
            <person name="Nefedov M."/>
            <person name="Koriabine M."/>
            <person name="Dejong P.J."/>
            <person name="Goodstadt L."/>
            <person name="Webber C."/>
            <person name="Dickens N.J."/>
            <person name="Letunic I."/>
            <person name="Suyama M."/>
            <person name="Torrents D."/>
            <person name="von Mering C."/>
            <person name="Zdobnov E.M."/>
            <person name="Makova K."/>
            <person name="Nekrutenko A."/>
            <person name="Elnitski L."/>
            <person name="Eswara P."/>
            <person name="King D.C."/>
            <person name="Yang S.-P."/>
            <person name="Tyekucheva S."/>
            <person name="Radakrishnan A."/>
            <person name="Harris R.S."/>
            <person name="Chiaromonte F."/>
            <person name="Taylor J."/>
            <person name="He J."/>
            <person name="Rijnkels M."/>
            <person name="Griffiths-Jones S."/>
            <person name="Ureta-Vidal A."/>
            <person name="Hoffman M.M."/>
            <person name="Severin J."/>
            <person name="Searle S.M.J."/>
            <person name="Law A.S."/>
            <person name="Speed D."/>
            <person name="Waddington D."/>
            <person name="Cheng Z."/>
            <person name="Tuzun E."/>
            <person name="Eichler E."/>
            <person name="Bao Z."/>
            <person name="Flicek P."/>
            <person name="Shteynberg D.D."/>
            <person name="Brent M.R."/>
            <person name="Bye J.M."/>
            <person name="Huckle E.J."/>
            <person name="Chatterji S."/>
            <person name="Dewey C."/>
            <person name="Pachter L."/>
            <person name="Kouranov A."/>
            <person name="Mourelatos Z."/>
            <person name="Hatzigeorgiou A.G."/>
            <person name="Paterson A.H."/>
            <person name="Ivarie R."/>
            <person name="Brandstrom M."/>
            <person name="Axelsson E."/>
            <person name="Backstrom N."/>
            <person name="Berlin S."/>
            <person name="Webster M.T."/>
            <person name="Pourquie O."/>
            <person name="Reymond A."/>
            <person name="Ucla C."/>
            <person name="Antonarakis S.E."/>
            <person name="Long M."/>
            <person name="Emerson J.J."/>
            <person name="Betran E."/>
            <person name="Dupanloup I."/>
            <person name="Kaessmann H."/>
            <person name="Hinrichs A.S."/>
            <person name="Bejerano G."/>
            <person name="Furey T.S."/>
            <person name="Harte R.A."/>
            <person name="Raney B."/>
            <person name="Siepel A."/>
            <person name="Kent W.J."/>
            <person name="Haussler D."/>
            <person name="Eyras E."/>
            <person name="Castelo R."/>
            <person name="Abril J.F."/>
            <person name="Castellano S."/>
            <person name="Camara F."/>
            <person name="Parra G."/>
            <person name="Guigo R."/>
            <person name="Bourque G."/>
            <person name="Tesler G."/>
            <person name="Pevzner P.A."/>
            <person name="Smit A."/>
            <person name="Fulton L.A."/>
            <person name="Mardis E.R."/>
            <person name="Wilson R.K."/>
        </authorList>
    </citation>
    <scope>NUCLEOTIDE SEQUENCE [LARGE SCALE GENOMIC DNA]</scope>
    <source>
        <strain>Red jungle fowl</strain>
    </source>
</reference>
<reference key="2">
    <citation type="journal article" date="2005" name="Proteomics">
        <title>Proteomic profiling of facial development in chick embryos.</title>
        <authorList>
            <person name="Mangum J.E."/>
            <person name="Farlie P.G."/>
            <person name="Hubbard M.J."/>
        </authorList>
    </citation>
    <scope>PROTEIN SEQUENCE OF 355-365</scope>
    <scope>IDENTIFICATION</scope>
    <source>
        <tissue>Embryo</tissue>
    </source>
</reference>
<protein>
    <recommendedName>
        <fullName>Alpha-fetoprotein</fullName>
    </recommendedName>
    <alternativeName>
        <fullName>Alpha-1-fetoprotein</fullName>
    </alternativeName>
    <alternativeName>
        <fullName>Alpha-fetoglobulin</fullName>
    </alternativeName>
</protein>
<evidence type="ECO:0000250" key="1">
    <source>
        <dbReference type="UniProtKB" id="P02771"/>
    </source>
</evidence>
<evidence type="ECO:0000255" key="2"/>
<evidence type="ECO:0000255" key="3">
    <source>
        <dbReference type="PROSITE-ProRule" id="PRU00769"/>
    </source>
</evidence>
<evidence type="ECO:0000305" key="4"/>
<accession>P84407</accession>
<keyword id="KW-0186">Copper</keyword>
<keyword id="KW-0903">Direct protein sequencing</keyword>
<keyword id="KW-1015">Disulfide bond</keyword>
<keyword id="KW-0325">Glycoprotein</keyword>
<keyword id="KW-0479">Metal-binding</keyword>
<keyword id="KW-0533">Nickel</keyword>
<keyword id="KW-1185">Reference proteome</keyword>
<keyword id="KW-0677">Repeat</keyword>
<keyword id="KW-0964">Secreted</keyword>
<keyword id="KW-0732">Signal</keyword>
<keyword id="KW-0765">Sulfation</keyword>
<comment type="function">
    <text evidence="1">Binds copper, nickel, and fatty acids as well as, and bilirubin less well than, serum albumin.</text>
</comment>
<comment type="subunit">
    <text evidence="1">Dimeric and trimeric forms have been found in addition to the monomeric form.</text>
</comment>
<comment type="subcellular location">
    <subcellularLocation>
        <location evidence="4">Secreted</location>
    </subcellularLocation>
</comment>
<comment type="PTM">
    <text evidence="1">Sulfated.</text>
</comment>
<comment type="similarity">
    <text evidence="3">Belongs to the ALB/AFP/VDB family.</text>
</comment>
<proteinExistence type="evidence at protein level"/>
<name>FETA_CHICK</name>
<organism>
    <name type="scientific">Gallus gallus</name>
    <name type="common">Chicken</name>
    <dbReference type="NCBI Taxonomy" id="9031"/>
    <lineage>
        <taxon>Eukaryota</taxon>
        <taxon>Metazoa</taxon>
        <taxon>Chordata</taxon>
        <taxon>Craniata</taxon>
        <taxon>Vertebrata</taxon>
        <taxon>Euteleostomi</taxon>
        <taxon>Archelosauria</taxon>
        <taxon>Archosauria</taxon>
        <taxon>Dinosauria</taxon>
        <taxon>Saurischia</taxon>
        <taxon>Theropoda</taxon>
        <taxon>Coelurosauria</taxon>
        <taxon>Aves</taxon>
        <taxon>Neognathae</taxon>
        <taxon>Galloanserae</taxon>
        <taxon>Galliformes</taxon>
        <taxon>Phasianidae</taxon>
        <taxon>Phasianinae</taxon>
        <taxon>Gallus</taxon>
    </lineage>
</organism>
<feature type="signal peptide" evidence="2">
    <location>
        <begin position="1"/>
        <end position="15"/>
    </location>
</feature>
<feature type="chain" id="PRO_0000001101" description="Alpha-fetoprotein" evidence="2">
    <location>
        <begin position="16"/>
        <end position="615"/>
    </location>
</feature>
<feature type="domain" description="Albumin 1" evidence="3">
    <location>
        <begin position="27"/>
        <end position="218"/>
    </location>
</feature>
<feature type="domain" description="Albumin 2" evidence="3">
    <location>
        <begin position="223"/>
        <end position="415"/>
    </location>
</feature>
<feature type="domain" description="Albumin 3" evidence="3">
    <location>
        <begin position="416"/>
        <end position="609"/>
    </location>
</feature>
<feature type="short sequence motif" description="Cell attachment site" evidence="2">
    <location>
        <begin position="14"/>
        <end position="16"/>
    </location>
</feature>
<feature type="short sequence motif" description="Cell attachment site" evidence="2">
    <location>
        <begin position="283"/>
        <end position="285"/>
    </location>
</feature>
<feature type="glycosylation site" description="N-linked (GlcNAc...) asparagine" evidence="2">
    <location>
        <position position="137"/>
    </location>
</feature>
<feature type="glycosylation site" description="N-linked (GlcNAc...) asparagine" evidence="2">
    <location>
        <position position="157"/>
    </location>
</feature>
<feature type="glycosylation site" description="N-linked (GlcNAc...) asparagine" evidence="2">
    <location>
        <position position="472"/>
    </location>
</feature>
<feature type="disulfide bond" evidence="1 3">
    <location>
        <begin position="109"/>
        <end position="121"/>
    </location>
</feature>
<feature type="disulfide bond" evidence="1 3">
    <location>
        <begin position="120"/>
        <end position="131"/>
    </location>
</feature>
<feature type="disulfide bond" evidence="1 3">
    <location>
        <begin position="155"/>
        <end position="200"/>
    </location>
</feature>
<feature type="disulfide bond" evidence="1 3">
    <location>
        <begin position="199"/>
        <end position="213"/>
    </location>
</feature>
<feature type="disulfide bond" evidence="1 3">
    <location>
        <begin position="236"/>
        <end position="282"/>
    </location>
</feature>
<feature type="disulfide bond" evidence="1 3">
    <location>
        <begin position="281"/>
        <end position="289"/>
    </location>
</feature>
<feature type="disulfide bond" evidence="1 3">
    <location>
        <begin position="301"/>
        <end position="315"/>
    </location>
</feature>
<feature type="disulfide bond" evidence="1 3">
    <location>
        <begin position="314"/>
        <end position="325"/>
    </location>
</feature>
<feature type="disulfide bond" evidence="1 3">
    <location>
        <begin position="396"/>
        <end position="405"/>
    </location>
</feature>
<feature type="disulfide bond" evidence="1 3">
    <location>
        <begin position="428"/>
        <end position="458"/>
    </location>
</feature>
<feature type="disulfide bond" evidence="1 3">
    <location>
        <begin position="457"/>
        <end position="468"/>
    </location>
</feature>
<feature type="disulfide bond" evidence="1 3">
    <location>
        <begin position="485"/>
        <end position="501"/>
    </location>
</feature>
<feature type="disulfide bond" evidence="1 3">
    <location>
        <begin position="500"/>
        <end position="511"/>
    </location>
</feature>
<feature type="disulfide bond" evidence="1 3">
    <location>
        <begin position="538"/>
        <end position="593"/>
    </location>
</feature>
<feature type="disulfide bond" evidence="1 3">
    <location>
        <begin position="592"/>
        <end position="601"/>
    </location>
</feature>
<sequence length="615" mass="70680">MAVLPLSGAIRLSRGDLVIETQTQDPWAKKLITQGTDKACADLDVQQIQALKMKCAMIMFAQYVQGNTFGQVVKMAEAVTDLAKKCTEVDRDNPNCRKPLDWIFLNTICQEDNLPRFTDCCAKKDPERNDCFLSLKNSSRGFISPFERPNAEAACKNYSEHRHSLPGYFIYEVSRRHPFLYAPTILSVAIHYDEMMKDCCRSAEDSTHNLEECFRRQAPKVVKPIREDGLRQEHTCGILKKFGERTIKALKLVQISQRFPKADFFTVTKLVSDIANMHKDCCRGDMLECMRDREEILHYVCTNQDVISSKIKKCCEKPLLQRSECIVNAENDDKPANLSPQVREFIEDKGICERFAQEKDTHLARFLYEYSRRHPEFSAQMLLRIGKGYEDLLDECCKTGSPDNCCSRGEEELKKHIYETESVMKTSCDIYKEKGDYYFQNEYIKFTKQMTTIGSKCCQLSQDKLLPCAEENVSLLVDLVLGEICRRHLTNPINPAVCHCCSSSYALRRPCMGKLEIDENYVPLSLTPDLFTFHEDLCTTEEEKLQHRKQEFGIPLLLSYPMLINLIKYKPQITQEQLTSITVAFTAMREQCCKEENREACFAKEVLVTLSPICS</sequence>